<proteinExistence type="inferred from homology"/>
<accession>Q2YUJ8</accession>
<dbReference type="EMBL" id="AJ938182">
    <property type="protein sequence ID" value="CAI81679.1"/>
    <property type="molecule type" value="Genomic_DNA"/>
</dbReference>
<dbReference type="RefSeq" id="WP_000241340.1">
    <property type="nucleotide sequence ID" value="NC_007622.1"/>
</dbReference>
<dbReference type="SMR" id="Q2YUJ8"/>
<dbReference type="KEGG" id="sab:SAB1990c"/>
<dbReference type="HOGENOM" id="CLU_085114_4_1_9"/>
<dbReference type="GO" id="GO:0005886">
    <property type="term" value="C:plasma membrane"/>
    <property type="evidence" value="ECO:0007669"/>
    <property type="project" value="UniProtKB-SubCell"/>
</dbReference>
<dbReference type="GO" id="GO:0045259">
    <property type="term" value="C:proton-transporting ATP synthase complex"/>
    <property type="evidence" value="ECO:0007669"/>
    <property type="project" value="UniProtKB-KW"/>
</dbReference>
<dbReference type="GO" id="GO:0046933">
    <property type="term" value="F:proton-transporting ATP synthase activity, rotational mechanism"/>
    <property type="evidence" value="ECO:0007669"/>
    <property type="project" value="UniProtKB-UniRule"/>
</dbReference>
<dbReference type="Gene3D" id="1.10.520.20">
    <property type="entry name" value="N-terminal domain of the delta subunit of the F1F0-ATP synthase"/>
    <property type="match status" value="1"/>
</dbReference>
<dbReference type="HAMAP" id="MF_01416">
    <property type="entry name" value="ATP_synth_delta_bact"/>
    <property type="match status" value="1"/>
</dbReference>
<dbReference type="InterPro" id="IPR026015">
    <property type="entry name" value="ATP_synth_OSCP/delta_N_sf"/>
</dbReference>
<dbReference type="InterPro" id="IPR020781">
    <property type="entry name" value="ATPase_OSCP/d_CS"/>
</dbReference>
<dbReference type="InterPro" id="IPR000711">
    <property type="entry name" value="ATPase_OSCP/dsu"/>
</dbReference>
<dbReference type="NCBIfam" id="TIGR01145">
    <property type="entry name" value="ATP_synt_delta"/>
    <property type="match status" value="1"/>
</dbReference>
<dbReference type="NCBIfam" id="NF004399">
    <property type="entry name" value="PRK05758.1-1"/>
    <property type="match status" value="1"/>
</dbReference>
<dbReference type="PANTHER" id="PTHR11910">
    <property type="entry name" value="ATP SYNTHASE DELTA CHAIN"/>
    <property type="match status" value="1"/>
</dbReference>
<dbReference type="Pfam" id="PF00213">
    <property type="entry name" value="OSCP"/>
    <property type="match status" value="1"/>
</dbReference>
<dbReference type="PRINTS" id="PR00125">
    <property type="entry name" value="ATPASEDELTA"/>
</dbReference>
<dbReference type="SUPFAM" id="SSF47928">
    <property type="entry name" value="N-terminal domain of the delta subunit of the F1F0-ATP synthase"/>
    <property type="match status" value="1"/>
</dbReference>
<dbReference type="PROSITE" id="PS00389">
    <property type="entry name" value="ATPASE_DELTA"/>
    <property type="match status" value="1"/>
</dbReference>
<name>ATPD_STAAB</name>
<reference key="1">
    <citation type="journal article" date="2007" name="PLoS ONE">
        <title>Molecular correlates of host specialization in Staphylococcus aureus.</title>
        <authorList>
            <person name="Herron-Olson L."/>
            <person name="Fitzgerald J.R."/>
            <person name="Musser J.M."/>
            <person name="Kapur V."/>
        </authorList>
    </citation>
    <scope>NUCLEOTIDE SEQUENCE [LARGE SCALE GENOMIC DNA]</scope>
    <source>
        <strain>bovine RF122 / ET3-1</strain>
    </source>
</reference>
<gene>
    <name evidence="1" type="primary">atpH</name>
    <name type="ordered locus">SAB1990c</name>
</gene>
<sequence>MVKVANKYAKALFDVSLDTNNLETINEELTVINEAVKDKIEQLKMVDSNPTQTAEQRRELINGVFIDINPYIKNMMYVLADNRHISLIADVFKAFQSLYNGHYNQDFATIESTYELSQEELDKIVKLVTQQTKLSKVIVDTKINPDLIGGFRVKVGTTVLDGSVRNDLVQLQRKFRRVN</sequence>
<comment type="function">
    <text evidence="1">F(1)F(0) ATP synthase produces ATP from ADP in the presence of a proton or sodium gradient. F-type ATPases consist of two structural domains, F(1) containing the extramembraneous catalytic core and F(0) containing the membrane proton channel, linked together by a central stalk and a peripheral stalk. During catalysis, ATP synthesis in the catalytic domain of F(1) is coupled via a rotary mechanism of the central stalk subunits to proton translocation.</text>
</comment>
<comment type="function">
    <text evidence="1">This protein is part of the stalk that links CF(0) to CF(1). It either transmits conformational changes from CF(0) to CF(1) or is implicated in proton conduction.</text>
</comment>
<comment type="subunit">
    <text evidence="1">F-type ATPases have 2 components, F(1) - the catalytic core - and F(0) - the membrane proton channel. F(1) has five subunits: alpha(3), beta(3), gamma(1), delta(1), epsilon(1). F(0) has three main subunits: a(1), b(2) and c(10-14). The alpha and beta chains form an alternating ring which encloses part of the gamma chain. F(1) is attached to F(0) by a central stalk formed by the gamma and epsilon chains, while a peripheral stalk is formed by the delta and b chains.</text>
</comment>
<comment type="subcellular location">
    <subcellularLocation>
        <location evidence="1">Cell membrane</location>
        <topology evidence="1">Peripheral membrane protein</topology>
    </subcellularLocation>
</comment>
<comment type="similarity">
    <text evidence="1">Belongs to the ATPase delta chain family.</text>
</comment>
<organism>
    <name type="scientific">Staphylococcus aureus (strain bovine RF122 / ET3-1)</name>
    <dbReference type="NCBI Taxonomy" id="273036"/>
    <lineage>
        <taxon>Bacteria</taxon>
        <taxon>Bacillati</taxon>
        <taxon>Bacillota</taxon>
        <taxon>Bacilli</taxon>
        <taxon>Bacillales</taxon>
        <taxon>Staphylococcaceae</taxon>
        <taxon>Staphylococcus</taxon>
    </lineage>
</organism>
<feature type="chain" id="PRO_0000371149" description="ATP synthase subunit delta">
    <location>
        <begin position="1"/>
        <end position="179"/>
    </location>
</feature>
<protein>
    <recommendedName>
        <fullName evidence="1">ATP synthase subunit delta</fullName>
    </recommendedName>
    <alternativeName>
        <fullName evidence="1">ATP synthase F(1) sector subunit delta</fullName>
    </alternativeName>
    <alternativeName>
        <fullName evidence="1">F-type ATPase subunit delta</fullName>
        <shortName evidence="1">F-ATPase subunit delta</shortName>
    </alternativeName>
</protein>
<keyword id="KW-0066">ATP synthesis</keyword>
<keyword id="KW-1003">Cell membrane</keyword>
<keyword id="KW-0139">CF(1)</keyword>
<keyword id="KW-0375">Hydrogen ion transport</keyword>
<keyword id="KW-0406">Ion transport</keyword>
<keyword id="KW-0472">Membrane</keyword>
<keyword id="KW-0813">Transport</keyword>
<evidence type="ECO:0000255" key="1">
    <source>
        <dbReference type="HAMAP-Rule" id="MF_01416"/>
    </source>
</evidence>